<reference key="1">
    <citation type="journal article" date="2005" name="Science">
        <title>Extensive DNA inversions in the B. fragilis genome control variable gene expression.</title>
        <authorList>
            <person name="Cerdeno-Tarraga A.-M."/>
            <person name="Patrick S."/>
            <person name="Crossman L.C."/>
            <person name="Blakely G."/>
            <person name="Abratt V."/>
            <person name="Lennard N."/>
            <person name="Poxton I."/>
            <person name="Duerden B."/>
            <person name="Harris B."/>
            <person name="Quail M.A."/>
            <person name="Barron A."/>
            <person name="Clark L."/>
            <person name="Corton C."/>
            <person name="Doggett J."/>
            <person name="Holden M.T.G."/>
            <person name="Larke N."/>
            <person name="Line A."/>
            <person name="Lord A."/>
            <person name="Norbertczak H."/>
            <person name="Ormond D."/>
            <person name="Price C."/>
            <person name="Rabbinowitsch E."/>
            <person name="Woodward J."/>
            <person name="Barrell B.G."/>
            <person name="Parkhill J."/>
        </authorList>
    </citation>
    <scope>NUCLEOTIDE SEQUENCE [LARGE SCALE GENOMIC DNA]</scope>
    <source>
        <strain>ATCC 25285 / DSM 2151 / CCUG 4856 / JCM 11019 / LMG 10263 / NCTC 9343 / Onslow / VPI 2553 / EN-2</strain>
    </source>
</reference>
<feature type="chain" id="PRO_0000225030" description="UDP-N-acetylglucosamine--N-acetylmuramyl-(pentapeptide) pyrophosphoryl-undecaprenol N-acetylglucosamine transferase">
    <location>
        <begin position="1"/>
        <end position="380"/>
    </location>
</feature>
<feature type="binding site" evidence="1">
    <location>
        <begin position="23"/>
        <end position="25"/>
    </location>
    <ligand>
        <name>UDP-N-acetyl-alpha-D-glucosamine</name>
        <dbReference type="ChEBI" id="CHEBI:57705"/>
    </ligand>
</feature>
<feature type="binding site" evidence="1">
    <location>
        <position position="137"/>
    </location>
    <ligand>
        <name>UDP-N-acetyl-alpha-D-glucosamine</name>
        <dbReference type="ChEBI" id="CHEBI:57705"/>
    </ligand>
</feature>
<feature type="binding site" evidence="1">
    <location>
        <position position="178"/>
    </location>
    <ligand>
        <name>UDP-N-acetyl-alpha-D-glucosamine</name>
        <dbReference type="ChEBI" id="CHEBI:57705"/>
    </ligand>
</feature>
<feature type="binding site" evidence="1">
    <location>
        <position position="210"/>
    </location>
    <ligand>
        <name>UDP-N-acetyl-alpha-D-glucosamine</name>
        <dbReference type="ChEBI" id="CHEBI:57705"/>
    </ligand>
</feature>
<feature type="binding site" evidence="1">
    <location>
        <position position="266"/>
    </location>
    <ligand>
        <name>UDP-N-acetyl-alpha-D-glucosamine</name>
        <dbReference type="ChEBI" id="CHEBI:57705"/>
    </ligand>
</feature>
<feature type="binding site" evidence="1">
    <location>
        <position position="311"/>
    </location>
    <ligand>
        <name>UDP-N-acetyl-alpha-D-glucosamine</name>
        <dbReference type="ChEBI" id="CHEBI:57705"/>
    </ligand>
</feature>
<keyword id="KW-0131">Cell cycle</keyword>
<keyword id="KW-0132">Cell division</keyword>
<keyword id="KW-0997">Cell inner membrane</keyword>
<keyword id="KW-1003">Cell membrane</keyword>
<keyword id="KW-0133">Cell shape</keyword>
<keyword id="KW-0961">Cell wall biogenesis/degradation</keyword>
<keyword id="KW-0328">Glycosyltransferase</keyword>
<keyword id="KW-0472">Membrane</keyword>
<keyword id="KW-0573">Peptidoglycan synthesis</keyword>
<keyword id="KW-0808">Transferase</keyword>
<gene>
    <name evidence="1" type="primary">murG</name>
    <name type="ordered locus">BF0254</name>
</gene>
<sequence>MNKENNKEGQGDALRVIISGGGTGGHIFPAVSIANAIKELRPDAQILFVGAEGRMEMQRVPDAGYQIIGLPVAGFDRKHLWKNVAVLLKLVRSQWKARNIIRQFRPQVAVGVGGYASGPTLKMAGMMGVPTLIQEQNSYAGVTNKLLAQKARRICVAYDGMEKFFPANKIIMTGNPVRQNLLAEKPEREQAIRSFGLNPEKKTILILGGSLGARTINNTLIAGLQLIRRTTDVQFIWQTGKIYHQQVTEAVKAAGEIPNLFVTDFIKDMAAAYAAADLVISRAGAGSISEFCLLNKPVILVPSPNVAEDHQTKNALALVNKQAAIYVKDAEAENKLLPVALETIANAEKLSELSENIAHLALPDSAVVIAKEVIKLAQQS</sequence>
<comment type="function">
    <text evidence="1">Cell wall formation. Catalyzes the transfer of a GlcNAc subunit on undecaprenyl-pyrophosphoryl-MurNAc-pentapeptide (lipid intermediate I) to form undecaprenyl-pyrophosphoryl-MurNAc-(pentapeptide)GlcNAc (lipid intermediate II).</text>
</comment>
<comment type="catalytic activity">
    <reaction evidence="1">
        <text>di-trans,octa-cis-undecaprenyl diphospho-N-acetyl-alpha-D-muramoyl-L-alanyl-D-glutamyl-meso-2,6-diaminopimeloyl-D-alanyl-D-alanine + UDP-N-acetyl-alpha-D-glucosamine = di-trans,octa-cis-undecaprenyl diphospho-[N-acetyl-alpha-D-glucosaminyl-(1-&gt;4)]-N-acetyl-alpha-D-muramoyl-L-alanyl-D-glutamyl-meso-2,6-diaminopimeloyl-D-alanyl-D-alanine + UDP + H(+)</text>
        <dbReference type="Rhea" id="RHEA:31227"/>
        <dbReference type="ChEBI" id="CHEBI:15378"/>
        <dbReference type="ChEBI" id="CHEBI:57705"/>
        <dbReference type="ChEBI" id="CHEBI:58223"/>
        <dbReference type="ChEBI" id="CHEBI:61387"/>
        <dbReference type="ChEBI" id="CHEBI:61388"/>
        <dbReference type="EC" id="2.4.1.227"/>
    </reaction>
</comment>
<comment type="pathway">
    <text evidence="1">Cell wall biogenesis; peptidoglycan biosynthesis.</text>
</comment>
<comment type="subcellular location">
    <subcellularLocation>
        <location evidence="1">Cell inner membrane</location>
        <topology evidence="1">Peripheral membrane protein</topology>
        <orientation evidence="1">Cytoplasmic side</orientation>
    </subcellularLocation>
</comment>
<comment type="similarity">
    <text evidence="1">Belongs to the glycosyltransferase 28 family. MurG subfamily.</text>
</comment>
<comment type="sequence caution" evidence="2">
    <conflict type="erroneous initiation">
        <sequence resource="EMBL-CDS" id="CAH06029"/>
    </conflict>
</comment>
<name>MURG_BACFN</name>
<dbReference type="EC" id="2.4.1.227" evidence="1"/>
<dbReference type="EMBL" id="CR626927">
    <property type="protein sequence ID" value="CAH06029.1"/>
    <property type="status" value="ALT_INIT"/>
    <property type="molecule type" value="Genomic_DNA"/>
</dbReference>
<dbReference type="RefSeq" id="WP_005784003.1">
    <property type="nucleotide sequence ID" value="NZ_UFTH01000001.1"/>
</dbReference>
<dbReference type="SMR" id="Q5LIJ7"/>
<dbReference type="CAZy" id="GT28">
    <property type="family name" value="Glycosyltransferase Family 28"/>
</dbReference>
<dbReference type="PaxDb" id="272559-BF9343_0250"/>
<dbReference type="GeneID" id="60368720"/>
<dbReference type="KEGG" id="bfs:BF9343_0250"/>
<dbReference type="eggNOG" id="COG0707">
    <property type="taxonomic scope" value="Bacteria"/>
</dbReference>
<dbReference type="HOGENOM" id="CLU_037404_0_1_10"/>
<dbReference type="UniPathway" id="UPA00219"/>
<dbReference type="Proteomes" id="UP000006731">
    <property type="component" value="Chromosome"/>
</dbReference>
<dbReference type="GO" id="GO:0005886">
    <property type="term" value="C:plasma membrane"/>
    <property type="evidence" value="ECO:0007669"/>
    <property type="project" value="UniProtKB-SubCell"/>
</dbReference>
<dbReference type="GO" id="GO:0051991">
    <property type="term" value="F:UDP-N-acetyl-D-glucosamine:N-acetylmuramoyl-L-alanyl-D-glutamyl-meso-2,6-diaminopimelyl-D-alanyl-D-alanine-diphosphoundecaprenol 4-beta-N-acetylglucosaminlytransferase activity"/>
    <property type="evidence" value="ECO:0007669"/>
    <property type="project" value="RHEA"/>
</dbReference>
<dbReference type="GO" id="GO:0050511">
    <property type="term" value="F:undecaprenyldiphospho-muramoylpentapeptide beta-N-acetylglucosaminyltransferase activity"/>
    <property type="evidence" value="ECO:0007669"/>
    <property type="project" value="UniProtKB-UniRule"/>
</dbReference>
<dbReference type="GO" id="GO:0005975">
    <property type="term" value="P:carbohydrate metabolic process"/>
    <property type="evidence" value="ECO:0007669"/>
    <property type="project" value="InterPro"/>
</dbReference>
<dbReference type="GO" id="GO:0051301">
    <property type="term" value="P:cell division"/>
    <property type="evidence" value="ECO:0007669"/>
    <property type="project" value="UniProtKB-KW"/>
</dbReference>
<dbReference type="GO" id="GO:0071555">
    <property type="term" value="P:cell wall organization"/>
    <property type="evidence" value="ECO:0007669"/>
    <property type="project" value="UniProtKB-KW"/>
</dbReference>
<dbReference type="GO" id="GO:0030259">
    <property type="term" value="P:lipid glycosylation"/>
    <property type="evidence" value="ECO:0007669"/>
    <property type="project" value="UniProtKB-UniRule"/>
</dbReference>
<dbReference type="GO" id="GO:0009252">
    <property type="term" value="P:peptidoglycan biosynthetic process"/>
    <property type="evidence" value="ECO:0007669"/>
    <property type="project" value="UniProtKB-UniRule"/>
</dbReference>
<dbReference type="GO" id="GO:0008360">
    <property type="term" value="P:regulation of cell shape"/>
    <property type="evidence" value="ECO:0007669"/>
    <property type="project" value="UniProtKB-KW"/>
</dbReference>
<dbReference type="CDD" id="cd03785">
    <property type="entry name" value="GT28_MurG"/>
    <property type="match status" value="1"/>
</dbReference>
<dbReference type="Gene3D" id="3.40.50.2000">
    <property type="entry name" value="Glycogen Phosphorylase B"/>
    <property type="match status" value="2"/>
</dbReference>
<dbReference type="HAMAP" id="MF_00033">
    <property type="entry name" value="MurG"/>
    <property type="match status" value="1"/>
</dbReference>
<dbReference type="InterPro" id="IPR006009">
    <property type="entry name" value="GlcNAc_MurG"/>
</dbReference>
<dbReference type="InterPro" id="IPR007235">
    <property type="entry name" value="Glyco_trans_28_C"/>
</dbReference>
<dbReference type="InterPro" id="IPR004276">
    <property type="entry name" value="GlycoTrans_28_N"/>
</dbReference>
<dbReference type="NCBIfam" id="TIGR01133">
    <property type="entry name" value="murG"/>
    <property type="match status" value="1"/>
</dbReference>
<dbReference type="PANTHER" id="PTHR21015:SF22">
    <property type="entry name" value="GLYCOSYLTRANSFERASE"/>
    <property type="match status" value="1"/>
</dbReference>
<dbReference type="PANTHER" id="PTHR21015">
    <property type="entry name" value="UDP-N-ACETYLGLUCOSAMINE--N-ACETYLMURAMYL-(PENTAPEPTIDE) PYROPHOSPHORYL-UNDECAPRENOL N-ACETYLGLUCOSAMINE TRANSFERASE 1"/>
    <property type="match status" value="1"/>
</dbReference>
<dbReference type="Pfam" id="PF04101">
    <property type="entry name" value="Glyco_tran_28_C"/>
    <property type="match status" value="1"/>
</dbReference>
<dbReference type="Pfam" id="PF03033">
    <property type="entry name" value="Glyco_transf_28"/>
    <property type="match status" value="1"/>
</dbReference>
<dbReference type="SUPFAM" id="SSF53756">
    <property type="entry name" value="UDP-Glycosyltransferase/glycogen phosphorylase"/>
    <property type="match status" value="1"/>
</dbReference>
<protein>
    <recommendedName>
        <fullName evidence="1">UDP-N-acetylglucosamine--N-acetylmuramyl-(pentapeptide) pyrophosphoryl-undecaprenol N-acetylglucosamine transferase</fullName>
        <ecNumber evidence="1">2.4.1.227</ecNumber>
    </recommendedName>
    <alternativeName>
        <fullName evidence="1">Undecaprenyl-PP-MurNAc-pentapeptide-UDPGlcNAc GlcNAc transferase</fullName>
    </alternativeName>
</protein>
<organism>
    <name type="scientific">Bacteroides fragilis (strain ATCC 25285 / DSM 2151 / CCUG 4856 / JCM 11019 / LMG 10263 / NCTC 9343 / Onslow / VPI 2553 / EN-2)</name>
    <dbReference type="NCBI Taxonomy" id="272559"/>
    <lineage>
        <taxon>Bacteria</taxon>
        <taxon>Pseudomonadati</taxon>
        <taxon>Bacteroidota</taxon>
        <taxon>Bacteroidia</taxon>
        <taxon>Bacteroidales</taxon>
        <taxon>Bacteroidaceae</taxon>
        <taxon>Bacteroides</taxon>
    </lineage>
</organism>
<proteinExistence type="inferred from homology"/>
<accession>Q5LIJ7</accession>
<evidence type="ECO:0000255" key="1">
    <source>
        <dbReference type="HAMAP-Rule" id="MF_00033"/>
    </source>
</evidence>
<evidence type="ECO:0000305" key="2"/>